<dbReference type="EC" id="1.17.7.4" evidence="1"/>
<dbReference type="EMBL" id="CR925677">
    <property type="protein sequence ID" value="CAI27985.1"/>
    <property type="status" value="ALT_INIT"/>
    <property type="molecule type" value="Genomic_DNA"/>
</dbReference>
<dbReference type="RefSeq" id="WP_044157008.1">
    <property type="nucleotide sequence ID" value="NC_006831.1"/>
</dbReference>
<dbReference type="SMR" id="Q5FFL5"/>
<dbReference type="KEGG" id="erg:ERGA_CDS_05330"/>
<dbReference type="HOGENOM" id="CLU_027486_1_0_5"/>
<dbReference type="OrthoDB" id="9804068at2"/>
<dbReference type="UniPathway" id="UPA00056">
    <property type="reaction ID" value="UER00097"/>
</dbReference>
<dbReference type="UniPathway" id="UPA00059">
    <property type="reaction ID" value="UER00105"/>
</dbReference>
<dbReference type="Proteomes" id="UP000000533">
    <property type="component" value="Chromosome"/>
</dbReference>
<dbReference type="GO" id="GO:0051539">
    <property type="term" value="F:4 iron, 4 sulfur cluster binding"/>
    <property type="evidence" value="ECO:0007669"/>
    <property type="project" value="UniProtKB-UniRule"/>
</dbReference>
<dbReference type="GO" id="GO:0051745">
    <property type="term" value="F:4-hydroxy-3-methylbut-2-enyl diphosphate reductase activity"/>
    <property type="evidence" value="ECO:0007669"/>
    <property type="project" value="UniProtKB-UniRule"/>
</dbReference>
<dbReference type="GO" id="GO:0046872">
    <property type="term" value="F:metal ion binding"/>
    <property type="evidence" value="ECO:0007669"/>
    <property type="project" value="UniProtKB-KW"/>
</dbReference>
<dbReference type="GO" id="GO:0050992">
    <property type="term" value="P:dimethylallyl diphosphate biosynthetic process"/>
    <property type="evidence" value="ECO:0007669"/>
    <property type="project" value="UniProtKB-UniRule"/>
</dbReference>
<dbReference type="GO" id="GO:0019288">
    <property type="term" value="P:isopentenyl diphosphate biosynthetic process, methylerythritol 4-phosphate pathway"/>
    <property type="evidence" value="ECO:0007669"/>
    <property type="project" value="UniProtKB-UniRule"/>
</dbReference>
<dbReference type="GO" id="GO:0016114">
    <property type="term" value="P:terpenoid biosynthetic process"/>
    <property type="evidence" value="ECO:0007669"/>
    <property type="project" value="UniProtKB-UniRule"/>
</dbReference>
<dbReference type="CDD" id="cd13944">
    <property type="entry name" value="lytB_ispH"/>
    <property type="match status" value="1"/>
</dbReference>
<dbReference type="Gene3D" id="3.40.50.11270">
    <property type="match status" value="1"/>
</dbReference>
<dbReference type="Gene3D" id="3.40.1010.20">
    <property type="entry name" value="4-hydroxy-3-methylbut-2-enyl diphosphate reductase, catalytic domain"/>
    <property type="match status" value="2"/>
</dbReference>
<dbReference type="HAMAP" id="MF_00191">
    <property type="entry name" value="IspH"/>
    <property type="match status" value="1"/>
</dbReference>
<dbReference type="InterPro" id="IPR003451">
    <property type="entry name" value="LytB/IspH"/>
</dbReference>
<dbReference type="NCBIfam" id="TIGR00216">
    <property type="entry name" value="ispH_lytB"/>
    <property type="match status" value="1"/>
</dbReference>
<dbReference type="NCBIfam" id="NF002188">
    <property type="entry name" value="PRK01045.1-2"/>
    <property type="match status" value="1"/>
</dbReference>
<dbReference type="NCBIfam" id="NF002190">
    <property type="entry name" value="PRK01045.1-4"/>
    <property type="match status" value="1"/>
</dbReference>
<dbReference type="PANTHER" id="PTHR30426">
    <property type="entry name" value="4-HYDROXY-3-METHYLBUT-2-ENYL DIPHOSPHATE REDUCTASE"/>
    <property type="match status" value="1"/>
</dbReference>
<dbReference type="PANTHER" id="PTHR30426:SF0">
    <property type="entry name" value="4-HYDROXY-3-METHYLBUT-2-ENYL DIPHOSPHATE REDUCTASE"/>
    <property type="match status" value="1"/>
</dbReference>
<dbReference type="Pfam" id="PF02401">
    <property type="entry name" value="LYTB"/>
    <property type="match status" value="1"/>
</dbReference>
<sequence length="328" mass="36921">MHNAIYTGLQKEVEVILATPRGFCAGVSRAIEIVKLAIEYYKDTKTIYVLHEIVHNKYIVETLKTMGVIFIDKVDQAQDGSVLIYSAHGVSKSIKQLAELRDLEVIDATCPLVNKVHKEVQLYDKSGYQVILIGHKGHREVEGTVGQISTPVIIVQNLNDIDKIEIFDPDKLAYVTQTTLSVDDTKVIIDKLKKKFPNIKGPDLKDICYATQNRQTTTKRLAELVDIVFILGSKNSSNSNRLKELAAIQTQAFLIDSYKEIDLNLLNDITKIGITAGASAPDILVQQVIDFLKQHMKVKLSDLEIVQESVTFNVPRQLRQYKEQYNPI</sequence>
<gene>
    <name evidence="1" type="primary">ispH</name>
    <name type="ordered locus">ERGA_CDS_05330</name>
</gene>
<name>ISPH_EHRRG</name>
<reference key="1">
    <citation type="journal article" date="2006" name="J. Bacteriol.">
        <title>Comparative genomic analysis of three strains of Ehrlichia ruminantium reveals an active process of genome size plasticity.</title>
        <authorList>
            <person name="Frutos R."/>
            <person name="Viari A."/>
            <person name="Ferraz C."/>
            <person name="Morgat A."/>
            <person name="Eychenie S."/>
            <person name="Kandassamy Y."/>
            <person name="Chantal I."/>
            <person name="Bensaid A."/>
            <person name="Coissac E."/>
            <person name="Vachiery N."/>
            <person name="Demaille J."/>
            <person name="Martinez D."/>
        </authorList>
    </citation>
    <scope>NUCLEOTIDE SEQUENCE [LARGE SCALE GENOMIC DNA]</scope>
    <source>
        <strain>Gardel</strain>
    </source>
</reference>
<proteinExistence type="inferred from homology"/>
<evidence type="ECO:0000255" key="1">
    <source>
        <dbReference type="HAMAP-Rule" id="MF_00191"/>
    </source>
</evidence>
<evidence type="ECO:0000305" key="2"/>
<keyword id="KW-0004">4Fe-4S</keyword>
<keyword id="KW-0408">Iron</keyword>
<keyword id="KW-0411">Iron-sulfur</keyword>
<keyword id="KW-0414">Isoprene biosynthesis</keyword>
<keyword id="KW-0479">Metal-binding</keyword>
<keyword id="KW-0560">Oxidoreductase</keyword>
<feature type="chain" id="PRO_0000128815" description="4-hydroxy-3-methylbut-2-enyl diphosphate reductase">
    <location>
        <begin position="1"/>
        <end position="328"/>
    </location>
</feature>
<feature type="active site" description="Proton donor" evidence="1">
    <location>
        <position position="140"/>
    </location>
</feature>
<feature type="binding site" evidence="1">
    <location>
        <position position="24"/>
    </location>
    <ligand>
        <name>[4Fe-4S] cluster</name>
        <dbReference type="ChEBI" id="CHEBI:49883"/>
    </ligand>
</feature>
<feature type="binding site" evidence="1">
    <location>
        <position position="55"/>
    </location>
    <ligand>
        <name>(2E)-4-hydroxy-3-methylbut-2-enyl diphosphate</name>
        <dbReference type="ChEBI" id="CHEBI:128753"/>
    </ligand>
</feature>
<feature type="binding site" evidence="1">
    <location>
        <position position="55"/>
    </location>
    <ligand>
        <name>dimethylallyl diphosphate</name>
        <dbReference type="ChEBI" id="CHEBI:57623"/>
    </ligand>
</feature>
<feature type="binding site" evidence="1">
    <location>
        <position position="55"/>
    </location>
    <ligand>
        <name>isopentenyl diphosphate</name>
        <dbReference type="ChEBI" id="CHEBI:128769"/>
    </ligand>
</feature>
<feature type="binding site" evidence="1">
    <location>
        <position position="88"/>
    </location>
    <ligand>
        <name>(2E)-4-hydroxy-3-methylbut-2-enyl diphosphate</name>
        <dbReference type="ChEBI" id="CHEBI:128753"/>
    </ligand>
</feature>
<feature type="binding site" evidence="1">
    <location>
        <position position="88"/>
    </location>
    <ligand>
        <name>dimethylallyl diphosphate</name>
        <dbReference type="ChEBI" id="CHEBI:57623"/>
    </ligand>
</feature>
<feature type="binding site" evidence="1">
    <location>
        <position position="88"/>
    </location>
    <ligand>
        <name>isopentenyl diphosphate</name>
        <dbReference type="ChEBI" id="CHEBI:128769"/>
    </ligand>
</feature>
<feature type="binding site" evidence="1">
    <location>
        <position position="110"/>
    </location>
    <ligand>
        <name>[4Fe-4S] cluster</name>
        <dbReference type="ChEBI" id="CHEBI:49883"/>
    </ligand>
</feature>
<feature type="binding site" evidence="1">
    <location>
        <position position="138"/>
    </location>
    <ligand>
        <name>(2E)-4-hydroxy-3-methylbut-2-enyl diphosphate</name>
        <dbReference type="ChEBI" id="CHEBI:128753"/>
    </ligand>
</feature>
<feature type="binding site" evidence="1">
    <location>
        <position position="138"/>
    </location>
    <ligand>
        <name>dimethylallyl diphosphate</name>
        <dbReference type="ChEBI" id="CHEBI:57623"/>
    </ligand>
</feature>
<feature type="binding site" evidence="1">
    <location>
        <position position="138"/>
    </location>
    <ligand>
        <name>isopentenyl diphosphate</name>
        <dbReference type="ChEBI" id="CHEBI:128769"/>
    </ligand>
</feature>
<feature type="binding site" evidence="1">
    <location>
        <position position="178"/>
    </location>
    <ligand>
        <name>(2E)-4-hydroxy-3-methylbut-2-enyl diphosphate</name>
        <dbReference type="ChEBI" id="CHEBI:128753"/>
    </ligand>
</feature>
<feature type="binding site" evidence="1">
    <location>
        <position position="208"/>
    </location>
    <ligand>
        <name>[4Fe-4S] cluster</name>
        <dbReference type="ChEBI" id="CHEBI:49883"/>
    </ligand>
</feature>
<feature type="binding site" evidence="1">
    <location>
        <position position="236"/>
    </location>
    <ligand>
        <name>(2E)-4-hydroxy-3-methylbut-2-enyl diphosphate</name>
        <dbReference type="ChEBI" id="CHEBI:128753"/>
    </ligand>
</feature>
<feature type="binding site" evidence="1">
    <location>
        <position position="236"/>
    </location>
    <ligand>
        <name>dimethylallyl diphosphate</name>
        <dbReference type="ChEBI" id="CHEBI:57623"/>
    </ligand>
</feature>
<feature type="binding site" evidence="1">
    <location>
        <position position="236"/>
    </location>
    <ligand>
        <name>isopentenyl diphosphate</name>
        <dbReference type="ChEBI" id="CHEBI:128769"/>
    </ligand>
</feature>
<feature type="binding site" evidence="1">
    <location>
        <position position="237"/>
    </location>
    <ligand>
        <name>(2E)-4-hydroxy-3-methylbut-2-enyl diphosphate</name>
        <dbReference type="ChEBI" id="CHEBI:128753"/>
    </ligand>
</feature>
<feature type="binding site" evidence="1">
    <location>
        <position position="237"/>
    </location>
    <ligand>
        <name>dimethylallyl diphosphate</name>
        <dbReference type="ChEBI" id="CHEBI:57623"/>
    </ligand>
</feature>
<feature type="binding site" evidence="1">
    <location>
        <position position="237"/>
    </location>
    <ligand>
        <name>isopentenyl diphosphate</name>
        <dbReference type="ChEBI" id="CHEBI:128769"/>
    </ligand>
</feature>
<feature type="binding site" evidence="1">
    <location>
        <position position="238"/>
    </location>
    <ligand>
        <name>(2E)-4-hydroxy-3-methylbut-2-enyl diphosphate</name>
        <dbReference type="ChEBI" id="CHEBI:128753"/>
    </ligand>
</feature>
<feature type="binding site" evidence="1">
    <location>
        <position position="238"/>
    </location>
    <ligand>
        <name>dimethylallyl diphosphate</name>
        <dbReference type="ChEBI" id="CHEBI:57623"/>
    </ligand>
</feature>
<feature type="binding site" evidence="1">
    <location>
        <position position="238"/>
    </location>
    <ligand>
        <name>isopentenyl diphosphate</name>
        <dbReference type="ChEBI" id="CHEBI:128769"/>
    </ligand>
</feature>
<feature type="binding site" evidence="1">
    <location>
        <position position="279"/>
    </location>
    <ligand>
        <name>(2E)-4-hydroxy-3-methylbut-2-enyl diphosphate</name>
        <dbReference type="ChEBI" id="CHEBI:128753"/>
    </ligand>
</feature>
<feature type="binding site" evidence="1">
    <location>
        <position position="279"/>
    </location>
    <ligand>
        <name>dimethylallyl diphosphate</name>
        <dbReference type="ChEBI" id="CHEBI:57623"/>
    </ligand>
</feature>
<feature type="binding site" evidence="1">
    <location>
        <position position="279"/>
    </location>
    <ligand>
        <name>isopentenyl diphosphate</name>
        <dbReference type="ChEBI" id="CHEBI:128769"/>
    </ligand>
</feature>
<accession>Q5FFL5</accession>
<organism>
    <name type="scientific">Ehrlichia ruminantium (strain Gardel)</name>
    <dbReference type="NCBI Taxonomy" id="302409"/>
    <lineage>
        <taxon>Bacteria</taxon>
        <taxon>Pseudomonadati</taxon>
        <taxon>Pseudomonadota</taxon>
        <taxon>Alphaproteobacteria</taxon>
        <taxon>Rickettsiales</taxon>
        <taxon>Anaplasmataceae</taxon>
        <taxon>Ehrlichia</taxon>
    </lineage>
</organism>
<comment type="function">
    <text evidence="1">Catalyzes the conversion of 1-hydroxy-2-methyl-2-(E)-butenyl 4-diphosphate (HMBPP) into a mixture of isopentenyl diphosphate (IPP) and dimethylallyl diphosphate (DMAPP). Acts in the terminal step of the DOXP/MEP pathway for isoprenoid precursor biosynthesis.</text>
</comment>
<comment type="catalytic activity">
    <reaction evidence="1">
        <text>isopentenyl diphosphate + 2 oxidized [2Fe-2S]-[ferredoxin] + H2O = (2E)-4-hydroxy-3-methylbut-2-enyl diphosphate + 2 reduced [2Fe-2S]-[ferredoxin] + 2 H(+)</text>
        <dbReference type="Rhea" id="RHEA:24488"/>
        <dbReference type="Rhea" id="RHEA-COMP:10000"/>
        <dbReference type="Rhea" id="RHEA-COMP:10001"/>
        <dbReference type="ChEBI" id="CHEBI:15377"/>
        <dbReference type="ChEBI" id="CHEBI:15378"/>
        <dbReference type="ChEBI" id="CHEBI:33737"/>
        <dbReference type="ChEBI" id="CHEBI:33738"/>
        <dbReference type="ChEBI" id="CHEBI:128753"/>
        <dbReference type="ChEBI" id="CHEBI:128769"/>
        <dbReference type="EC" id="1.17.7.4"/>
    </reaction>
</comment>
<comment type="catalytic activity">
    <reaction evidence="1">
        <text>dimethylallyl diphosphate + 2 oxidized [2Fe-2S]-[ferredoxin] + H2O = (2E)-4-hydroxy-3-methylbut-2-enyl diphosphate + 2 reduced [2Fe-2S]-[ferredoxin] + 2 H(+)</text>
        <dbReference type="Rhea" id="RHEA:24825"/>
        <dbReference type="Rhea" id="RHEA-COMP:10000"/>
        <dbReference type="Rhea" id="RHEA-COMP:10001"/>
        <dbReference type="ChEBI" id="CHEBI:15377"/>
        <dbReference type="ChEBI" id="CHEBI:15378"/>
        <dbReference type="ChEBI" id="CHEBI:33737"/>
        <dbReference type="ChEBI" id="CHEBI:33738"/>
        <dbReference type="ChEBI" id="CHEBI:57623"/>
        <dbReference type="ChEBI" id="CHEBI:128753"/>
        <dbReference type="EC" id="1.17.7.4"/>
    </reaction>
</comment>
<comment type="cofactor">
    <cofactor evidence="1">
        <name>[4Fe-4S] cluster</name>
        <dbReference type="ChEBI" id="CHEBI:49883"/>
    </cofactor>
    <text evidence="1">Binds 1 [4Fe-4S] cluster per subunit.</text>
</comment>
<comment type="pathway">
    <text evidence="1">Isoprenoid biosynthesis; dimethylallyl diphosphate biosynthesis; dimethylallyl diphosphate from (2E)-4-hydroxy-3-methylbutenyl diphosphate: step 1/1.</text>
</comment>
<comment type="pathway">
    <text evidence="1">Isoprenoid biosynthesis; isopentenyl diphosphate biosynthesis via DXP pathway; isopentenyl diphosphate from 1-deoxy-D-xylulose 5-phosphate: step 6/6.</text>
</comment>
<comment type="similarity">
    <text evidence="1">Belongs to the IspH family.</text>
</comment>
<comment type="sequence caution" evidence="2">
    <conflict type="erroneous initiation">
        <sequence resource="EMBL-CDS" id="CAI27985"/>
    </conflict>
</comment>
<protein>
    <recommendedName>
        <fullName evidence="1">4-hydroxy-3-methylbut-2-enyl diphosphate reductase</fullName>
        <shortName evidence="1">HMBPP reductase</shortName>
        <ecNumber evidence="1">1.17.7.4</ecNumber>
    </recommendedName>
</protein>